<organism>
    <name type="scientific">Burkholderia ambifaria (strain MC40-6)</name>
    <dbReference type="NCBI Taxonomy" id="398577"/>
    <lineage>
        <taxon>Bacteria</taxon>
        <taxon>Pseudomonadati</taxon>
        <taxon>Pseudomonadota</taxon>
        <taxon>Betaproteobacteria</taxon>
        <taxon>Burkholderiales</taxon>
        <taxon>Burkholderiaceae</taxon>
        <taxon>Burkholderia</taxon>
        <taxon>Burkholderia cepacia complex</taxon>
    </lineage>
</organism>
<sequence length="103" mass="11828">MQQQKIRIRLKAFDYRLIDQSAAEIVDTAKRTGAIVRGPVPLPTRIQRFDILRSPHVNKTSRDQLEIRTHQRLMDIVDPTDKTVDALMKLDLPAGVDVEIKLQ</sequence>
<evidence type="ECO:0000255" key="1">
    <source>
        <dbReference type="HAMAP-Rule" id="MF_00508"/>
    </source>
</evidence>
<evidence type="ECO:0000305" key="2"/>
<dbReference type="EMBL" id="CP001025">
    <property type="protein sequence ID" value="ACB62776.1"/>
    <property type="molecule type" value="Genomic_DNA"/>
</dbReference>
<dbReference type="RefSeq" id="WP_004199280.1">
    <property type="nucleotide sequence ID" value="NC_010551.1"/>
</dbReference>
<dbReference type="SMR" id="B1YRC9"/>
<dbReference type="GeneID" id="98107161"/>
<dbReference type="KEGG" id="bac:BamMC406_0275"/>
<dbReference type="HOGENOM" id="CLU_122625_1_3_4"/>
<dbReference type="OrthoDB" id="9804464at2"/>
<dbReference type="Proteomes" id="UP000001680">
    <property type="component" value="Chromosome 1"/>
</dbReference>
<dbReference type="GO" id="GO:1990904">
    <property type="term" value="C:ribonucleoprotein complex"/>
    <property type="evidence" value="ECO:0007669"/>
    <property type="project" value="UniProtKB-KW"/>
</dbReference>
<dbReference type="GO" id="GO:0005840">
    <property type="term" value="C:ribosome"/>
    <property type="evidence" value="ECO:0007669"/>
    <property type="project" value="UniProtKB-KW"/>
</dbReference>
<dbReference type="GO" id="GO:0003735">
    <property type="term" value="F:structural constituent of ribosome"/>
    <property type="evidence" value="ECO:0007669"/>
    <property type="project" value="InterPro"/>
</dbReference>
<dbReference type="GO" id="GO:0000049">
    <property type="term" value="F:tRNA binding"/>
    <property type="evidence" value="ECO:0007669"/>
    <property type="project" value="UniProtKB-UniRule"/>
</dbReference>
<dbReference type="GO" id="GO:0006412">
    <property type="term" value="P:translation"/>
    <property type="evidence" value="ECO:0007669"/>
    <property type="project" value="UniProtKB-UniRule"/>
</dbReference>
<dbReference type="FunFam" id="3.30.70.600:FF:000001">
    <property type="entry name" value="30S ribosomal protein S10"/>
    <property type="match status" value="1"/>
</dbReference>
<dbReference type="Gene3D" id="3.30.70.600">
    <property type="entry name" value="Ribosomal protein S10 domain"/>
    <property type="match status" value="1"/>
</dbReference>
<dbReference type="HAMAP" id="MF_00508">
    <property type="entry name" value="Ribosomal_uS10"/>
    <property type="match status" value="1"/>
</dbReference>
<dbReference type="InterPro" id="IPR001848">
    <property type="entry name" value="Ribosomal_uS10"/>
</dbReference>
<dbReference type="InterPro" id="IPR018268">
    <property type="entry name" value="Ribosomal_uS10_CS"/>
</dbReference>
<dbReference type="InterPro" id="IPR027486">
    <property type="entry name" value="Ribosomal_uS10_dom"/>
</dbReference>
<dbReference type="InterPro" id="IPR036838">
    <property type="entry name" value="Ribosomal_uS10_dom_sf"/>
</dbReference>
<dbReference type="NCBIfam" id="NF001861">
    <property type="entry name" value="PRK00596.1"/>
    <property type="match status" value="1"/>
</dbReference>
<dbReference type="NCBIfam" id="TIGR01049">
    <property type="entry name" value="rpsJ_bact"/>
    <property type="match status" value="1"/>
</dbReference>
<dbReference type="PANTHER" id="PTHR11700">
    <property type="entry name" value="30S RIBOSOMAL PROTEIN S10 FAMILY MEMBER"/>
    <property type="match status" value="1"/>
</dbReference>
<dbReference type="Pfam" id="PF00338">
    <property type="entry name" value="Ribosomal_S10"/>
    <property type="match status" value="1"/>
</dbReference>
<dbReference type="PRINTS" id="PR00971">
    <property type="entry name" value="RIBOSOMALS10"/>
</dbReference>
<dbReference type="SMART" id="SM01403">
    <property type="entry name" value="Ribosomal_S10"/>
    <property type="match status" value="1"/>
</dbReference>
<dbReference type="SUPFAM" id="SSF54999">
    <property type="entry name" value="Ribosomal protein S10"/>
    <property type="match status" value="1"/>
</dbReference>
<dbReference type="PROSITE" id="PS00361">
    <property type="entry name" value="RIBOSOMAL_S10"/>
    <property type="match status" value="1"/>
</dbReference>
<accession>B1YRC9</accession>
<proteinExistence type="inferred from homology"/>
<keyword id="KW-0687">Ribonucleoprotein</keyword>
<keyword id="KW-0689">Ribosomal protein</keyword>
<name>RS10_BURA4</name>
<comment type="function">
    <text evidence="1">Involved in the binding of tRNA to the ribosomes.</text>
</comment>
<comment type="subunit">
    <text evidence="1">Part of the 30S ribosomal subunit.</text>
</comment>
<comment type="similarity">
    <text evidence="1">Belongs to the universal ribosomal protein uS10 family.</text>
</comment>
<feature type="chain" id="PRO_1000127089" description="Small ribosomal subunit protein uS10">
    <location>
        <begin position="1"/>
        <end position="103"/>
    </location>
</feature>
<gene>
    <name evidence="1" type="primary">rpsJ</name>
    <name type="ordered locus">BamMC406_0275</name>
</gene>
<protein>
    <recommendedName>
        <fullName evidence="1">Small ribosomal subunit protein uS10</fullName>
    </recommendedName>
    <alternativeName>
        <fullName evidence="2">30S ribosomal protein S10</fullName>
    </alternativeName>
</protein>
<reference key="1">
    <citation type="submission" date="2008-04" db="EMBL/GenBank/DDBJ databases">
        <title>Complete sequence of chromosome 1 of Burkholderia ambifaria MC40-6.</title>
        <authorList>
            <person name="Copeland A."/>
            <person name="Lucas S."/>
            <person name="Lapidus A."/>
            <person name="Glavina del Rio T."/>
            <person name="Dalin E."/>
            <person name="Tice H."/>
            <person name="Pitluck S."/>
            <person name="Chain P."/>
            <person name="Malfatti S."/>
            <person name="Shin M."/>
            <person name="Vergez L."/>
            <person name="Lang D."/>
            <person name="Schmutz J."/>
            <person name="Larimer F."/>
            <person name="Land M."/>
            <person name="Hauser L."/>
            <person name="Kyrpides N."/>
            <person name="Lykidis A."/>
            <person name="Ramette A."/>
            <person name="Konstantinidis K."/>
            <person name="Tiedje J."/>
            <person name="Richardson P."/>
        </authorList>
    </citation>
    <scope>NUCLEOTIDE SEQUENCE [LARGE SCALE GENOMIC DNA]</scope>
    <source>
        <strain>MC40-6</strain>
    </source>
</reference>